<protein>
    <recommendedName>
        <fullName>Putative non-heme bromoperoxidase BpoC</fullName>
    </recommendedName>
</protein>
<comment type="subunit">
    <text evidence="1">Homodimer.</text>
</comment>
<comment type="similarity">
    <text evidence="2">Belongs to the AB hydrolase superfamily.</text>
</comment>
<gene>
    <name type="primary">bpoC</name>
    <name type="ordered locus">MT0580</name>
</gene>
<name>BPOC_MYCTO</name>
<dbReference type="EMBL" id="AE000516">
    <property type="protein sequence ID" value="AAK44803.1"/>
    <property type="molecule type" value="Genomic_DNA"/>
</dbReference>
<dbReference type="PIR" id="E70548">
    <property type="entry name" value="E70548"/>
</dbReference>
<dbReference type="RefSeq" id="WP_003402925.1">
    <property type="nucleotide sequence ID" value="NZ_KK341227.1"/>
</dbReference>
<dbReference type="SMR" id="P9WNH0"/>
<dbReference type="ESTHER" id="myctu-bpoC">
    <property type="family name" value="6_AlphaBeta_hydrolase"/>
</dbReference>
<dbReference type="KEGG" id="mtc:MT0580"/>
<dbReference type="PATRIC" id="fig|83331.31.peg.611"/>
<dbReference type="HOGENOM" id="CLU_020336_50_1_11"/>
<dbReference type="Proteomes" id="UP000001020">
    <property type="component" value="Chromosome"/>
</dbReference>
<dbReference type="GO" id="GO:0019806">
    <property type="term" value="F:bromide peroxidase activity"/>
    <property type="evidence" value="ECO:0007669"/>
    <property type="project" value="UniProtKB-EC"/>
</dbReference>
<dbReference type="Gene3D" id="3.40.50.1820">
    <property type="entry name" value="alpha/beta hydrolase"/>
    <property type="match status" value="1"/>
</dbReference>
<dbReference type="InterPro" id="IPR050471">
    <property type="entry name" value="AB_hydrolase"/>
</dbReference>
<dbReference type="InterPro" id="IPR000073">
    <property type="entry name" value="AB_hydrolase_1"/>
</dbReference>
<dbReference type="InterPro" id="IPR029058">
    <property type="entry name" value="AB_hydrolase_fold"/>
</dbReference>
<dbReference type="InterPro" id="IPR000639">
    <property type="entry name" value="Epox_hydrolase-like"/>
</dbReference>
<dbReference type="PANTHER" id="PTHR43433:SF5">
    <property type="entry name" value="AB HYDROLASE-1 DOMAIN-CONTAINING PROTEIN"/>
    <property type="match status" value="1"/>
</dbReference>
<dbReference type="PANTHER" id="PTHR43433">
    <property type="entry name" value="HYDROLASE, ALPHA/BETA FOLD FAMILY PROTEIN"/>
    <property type="match status" value="1"/>
</dbReference>
<dbReference type="Pfam" id="PF00561">
    <property type="entry name" value="Abhydrolase_1"/>
    <property type="match status" value="1"/>
</dbReference>
<dbReference type="PRINTS" id="PR00111">
    <property type="entry name" value="ABHYDROLASE"/>
</dbReference>
<dbReference type="PRINTS" id="PR00412">
    <property type="entry name" value="EPOXHYDRLASE"/>
</dbReference>
<dbReference type="SUPFAM" id="SSF53474">
    <property type="entry name" value="alpha/beta-Hydrolases"/>
    <property type="match status" value="1"/>
</dbReference>
<reference key="1">
    <citation type="journal article" date="2002" name="J. Bacteriol.">
        <title>Whole-genome comparison of Mycobacterium tuberculosis clinical and laboratory strains.</title>
        <authorList>
            <person name="Fleischmann R.D."/>
            <person name="Alland D."/>
            <person name="Eisen J.A."/>
            <person name="Carpenter L."/>
            <person name="White O."/>
            <person name="Peterson J.D."/>
            <person name="DeBoy R.T."/>
            <person name="Dodson R.J."/>
            <person name="Gwinn M.L."/>
            <person name="Haft D.H."/>
            <person name="Hickey E.K."/>
            <person name="Kolonay J.F."/>
            <person name="Nelson W.C."/>
            <person name="Umayam L.A."/>
            <person name="Ermolaeva M.D."/>
            <person name="Salzberg S.L."/>
            <person name="Delcher A."/>
            <person name="Utterback T.R."/>
            <person name="Weidman J.F."/>
            <person name="Khouri H.M."/>
            <person name="Gill J."/>
            <person name="Mikula A."/>
            <person name="Bishai W."/>
            <person name="Jacobs W.R. Jr."/>
            <person name="Venter J.C."/>
            <person name="Fraser C.M."/>
        </authorList>
    </citation>
    <scope>NUCLEOTIDE SEQUENCE [LARGE SCALE GENOMIC DNA]</scope>
    <source>
        <strain>CDC 1551 / Oshkosh</strain>
    </source>
</reference>
<feature type="chain" id="PRO_0000427128" description="Putative non-heme bromoperoxidase BpoC">
    <location>
        <begin position="1"/>
        <end position="262"/>
    </location>
</feature>
<feature type="active site" evidence="1">
    <location>
        <position position="87"/>
    </location>
</feature>
<feature type="active site" evidence="1">
    <location>
        <position position="211"/>
    </location>
</feature>
<feature type="active site" evidence="1">
    <location>
        <position position="239"/>
    </location>
</feature>
<feature type="binding site" evidence="1">
    <location>
        <position position="21"/>
    </location>
    <ligand>
        <name>substrate</name>
    </ligand>
</feature>
<feature type="binding site" evidence="1">
    <location>
        <begin position="87"/>
        <end position="88"/>
    </location>
    <ligand>
        <name>substrate</name>
    </ligand>
</feature>
<feature type="binding site" evidence="1">
    <location>
        <position position="120"/>
    </location>
    <ligand>
        <name>substrate</name>
    </ligand>
</feature>
<feature type="binding site" evidence="1">
    <location>
        <position position="239"/>
    </location>
    <ligand>
        <name>substrate</name>
    </ligand>
</feature>
<sequence length="262" mass="28381">MINLAYDDNGTGDPVVFIAGRGGAGRTWHPHQVPAFLAAGYRCITFDNRGIGATENAEGFTTQTMVADTAALIETLDIAPARVVGVSMGAFIAQELMVVAPELVSSAVLMATRGRLDRARQFFNKAEAELYDSGVQLPPTYDARARLLENFSRKTLNDDVAVGDWIAMFSMWPIKSTPGLRCQLDCAPQTNRLPAYRNIAAPVLVIGFADDVVTPPYLGREVADALPNGRYLQIPDAGHLGFFERPEAVNTAMLKFFASVKA</sequence>
<evidence type="ECO:0000250" key="1">
    <source>
        <dbReference type="UniProtKB" id="P9WNH1"/>
    </source>
</evidence>
<evidence type="ECO:0000305" key="2"/>
<proteinExistence type="inferred from homology"/>
<organism>
    <name type="scientific">Mycobacterium tuberculosis (strain CDC 1551 / Oshkosh)</name>
    <dbReference type="NCBI Taxonomy" id="83331"/>
    <lineage>
        <taxon>Bacteria</taxon>
        <taxon>Bacillati</taxon>
        <taxon>Actinomycetota</taxon>
        <taxon>Actinomycetes</taxon>
        <taxon>Mycobacteriales</taxon>
        <taxon>Mycobacteriaceae</taxon>
        <taxon>Mycobacterium</taxon>
        <taxon>Mycobacterium tuberculosis complex</taxon>
    </lineage>
</organism>
<accession>P9WNH0</accession>
<accession>L0T713</accession>
<accession>O06420</accession>
<accession>Q7D9N2</accession>
<keyword id="KW-0560">Oxidoreductase</keyword>
<keyword id="KW-0575">Peroxidase</keyword>
<keyword id="KW-1185">Reference proteome</keyword>